<dbReference type="EMBL" id="X84373">
    <property type="protein sequence ID" value="CAA59108.1"/>
    <property type="molecule type" value="mRNA"/>
</dbReference>
<dbReference type="EMBL" id="AF248484">
    <property type="protein sequence ID" value="AAF62185.1"/>
    <property type="molecule type" value="Genomic_DNA"/>
</dbReference>
<dbReference type="EMBL" id="AF127577">
    <property type="protein sequence ID" value="AAF35255.1"/>
    <property type="molecule type" value="Genomic_DNA"/>
</dbReference>
<dbReference type="EMBL" id="AL163207">
    <property type="protein sequence ID" value="CAB90396.1"/>
    <property type="molecule type" value="Genomic_DNA"/>
</dbReference>
<dbReference type="EMBL" id="BC040361">
    <property type="protein sequence ID" value="AAH40361.1"/>
    <property type="molecule type" value="mRNA"/>
</dbReference>
<dbReference type="CCDS" id="CCDS13568.1"/>
<dbReference type="PIR" id="S57348">
    <property type="entry name" value="S57348"/>
</dbReference>
<dbReference type="RefSeq" id="NP_003480.2">
    <property type="nucleotide sequence ID" value="NM_003489.4"/>
</dbReference>
<dbReference type="RefSeq" id="XP_005261120.1">
    <property type="nucleotide sequence ID" value="XM_005261063.4"/>
</dbReference>
<dbReference type="RefSeq" id="XP_005261122.1">
    <property type="nucleotide sequence ID" value="XM_005261065.4"/>
</dbReference>
<dbReference type="RefSeq" id="XP_011528049.1">
    <property type="nucleotide sequence ID" value="XM_011529747.2"/>
</dbReference>
<dbReference type="RefSeq" id="XP_011528050.1">
    <property type="nucleotide sequence ID" value="XM_011529748.3"/>
</dbReference>
<dbReference type="RefSeq" id="XP_011528051.1">
    <property type="nucleotide sequence ID" value="XM_011529749.3"/>
</dbReference>
<dbReference type="RefSeq" id="XP_011528053.1">
    <property type="nucleotide sequence ID" value="XM_011529751.3"/>
</dbReference>
<dbReference type="RefSeq" id="XP_011528054.1">
    <property type="nucleotide sequence ID" value="XM_011529752.2"/>
</dbReference>
<dbReference type="RefSeq" id="XP_016883962.1">
    <property type="nucleotide sequence ID" value="XM_017028473.2"/>
</dbReference>
<dbReference type="RefSeq" id="XP_016883963.1">
    <property type="nucleotide sequence ID" value="XM_017028474.1"/>
</dbReference>
<dbReference type="RefSeq" id="XP_016883964.1">
    <property type="nucleotide sequence ID" value="XM_017028475.2"/>
</dbReference>
<dbReference type="RefSeq" id="XP_016883965.1">
    <property type="nucleotide sequence ID" value="XM_017028476.2"/>
</dbReference>
<dbReference type="RefSeq" id="XP_047296946.1">
    <property type="nucleotide sequence ID" value="XM_047440990.1"/>
</dbReference>
<dbReference type="RefSeq" id="XP_047296947.1">
    <property type="nucleotide sequence ID" value="XM_047440991.1"/>
</dbReference>
<dbReference type="RefSeq" id="XP_047296948.1">
    <property type="nucleotide sequence ID" value="XM_047440992.1"/>
</dbReference>
<dbReference type="RefSeq" id="XP_047296949.1">
    <property type="nucleotide sequence ID" value="XM_047440993.1"/>
</dbReference>
<dbReference type="RefSeq" id="XP_047296950.1">
    <property type="nucleotide sequence ID" value="XM_047440994.1"/>
</dbReference>
<dbReference type="RefSeq" id="XP_047296951.1">
    <property type="nucleotide sequence ID" value="XM_047440995.1"/>
</dbReference>
<dbReference type="RefSeq" id="XP_047296952.1">
    <property type="nucleotide sequence ID" value="XM_047440996.1"/>
</dbReference>
<dbReference type="RefSeq" id="XP_047296953.1">
    <property type="nucleotide sequence ID" value="XM_047440997.1"/>
</dbReference>
<dbReference type="RefSeq" id="XP_047296954.1">
    <property type="nucleotide sequence ID" value="XM_047440998.1"/>
</dbReference>
<dbReference type="RefSeq" id="XP_047296955.1">
    <property type="nucleotide sequence ID" value="XM_047440999.1"/>
</dbReference>
<dbReference type="RefSeq" id="XP_054180827.1">
    <property type="nucleotide sequence ID" value="XM_054324852.1"/>
</dbReference>
<dbReference type="RefSeq" id="XP_054180828.1">
    <property type="nucleotide sequence ID" value="XM_054324853.1"/>
</dbReference>
<dbReference type="RefSeq" id="XP_054180829.1">
    <property type="nucleotide sequence ID" value="XM_054324854.1"/>
</dbReference>
<dbReference type="RefSeq" id="XP_054180830.1">
    <property type="nucleotide sequence ID" value="XM_054324855.1"/>
</dbReference>
<dbReference type="RefSeq" id="XP_054180831.1">
    <property type="nucleotide sequence ID" value="XM_054324856.1"/>
</dbReference>
<dbReference type="RefSeq" id="XP_054180832.1">
    <property type="nucleotide sequence ID" value="XM_054324857.1"/>
</dbReference>
<dbReference type="RefSeq" id="XP_054180833.1">
    <property type="nucleotide sequence ID" value="XM_054324858.1"/>
</dbReference>
<dbReference type="RefSeq" id="XP_054180834.1">
    <property type="nucleotide sequence ID" value="XM_054324859.1"/>
</dbReference>
<dbReference type="RefSeq" id="XP_054180835.1">
    <property type="nucleotide sequence ID" value="XM_054324860.1"/>
</dbReference>
<dbReference type="RefSeq" id="XP_054180836.1">
    <property type="nucleotide sequence ID" value="XM_054324861.1"/>
</dbReference>
<dbReference type="RefSeq" id="XP_054180837.1">
    <property type="nucleotide sequence ID" value="XM_054324862.1"/>
</dbReference>
<dbReference type="RefSeq" id="XP_054180838.1">
    <property type="nucleotide sequence ID" value="XM_054324863.1"/>
</dbReference>
<dbReference type="RefSeq" id="XP_054180839.1">
    <property type="nucleotide sequence ID" value="XM_054324864.1"/>
</dbReference>
<dbReference type="RefSeq" id="XP_054180840.1">
    <property type="nucleotide sequence ID" value="XM_054324865.1"/>
</dbReference>
<dbReference type="RefSeq" id="XP_054180841.1">
    <property type="nucleotide sequence ID" value="XM_054324866.1"/>
</dbReference>
<dbReference type="RefSeq" id="XP_054180842.1">
    <property type="nucleotide sequence ID" value="XM_054324867.1"/>
</dbReference>
<dbReference type="RefSeq" id="XP_054180843.1">
    <property type="nucleotide sequence ID" value="XM_054324868.1"/>
</dbReference>
<dbReference type="RefSeq" id="XP_054180844.1">
    <property type="nucleotide sequence ID" value="XM_054324869.1"/>
</dbReference>
<dbReference type="RefSeq" id="XP_054180845.1">
    <property type="nucleotide sequence ID" value="XM_054324870.1"/>
</dbReference>
<dbReference type="RefSeq" id="XP_054180846.1">
    <property type="nucleotide sequence ID" value="XM_054324871.1"/>
</dbReference>
<dbReference type="RefSeq" id="XP_054180847.1">
    <property type="nucleotide sequence ID" value="XM_054324872.1"/>
</dbReference>
<dbReference type="RefSeq" id="XP_054180848.1">
    <property type="nucleotide sequence ID" value="XM_054324873.1"/>
</dbReference>
<dbReference type="RefSeq" id="XP_054180849.1">
    <property type="nucleotide sequence ID" value="XM_054324874.1"/>
</dbReference>
<dbReference type="RefSeq" id="XP_054180850.1">
    <property type="nucleotide sequence ID" value="XM_054324875.1"/>
</dbReference>
<dbReference type="PDB" id="2GPO">
    <property type="method" value="X-ray"/>
    <property type="resolution" value="1.95 A"/>
    <property type="chains" value="C=366-390"/>
</dbReference>
<dbReference type="PDB" id="2GPP">
    <property type="method" value="X-ray"/>
    <property type="resolution" value="2.60 A"/>
    <property type="chains" value="C/D=366-390"/>
</dbReference>
<dbReference type="PDB" id="4S14">
    <property type="method" value="X-ray"/>
    <property type="resolution" value="3.54 A"/>
    <property type="chains" value="C=499-510"/>
</dbReference>
<dbReference type="PDB" id="4S15">
    <property type="method" value="X-ray"/>
    <property type="resolution" value="1.90 A"/>
    <property type="chains" value="C/D=499-510"/>
</dbReference>
<dbReference type="PDB" id="5NTI">
    <property type="method" value="X-ray"/>
    <property type="resolution" value="2.40 A"/>
    <property type="chains" value="P/Q/R/S=493-512"/>
</dbReference>
<dbReference type="PDB" id="5NTN">
    <property type="method" value="X-ray"/>
    <property type="resolution" value="1.90 A"/>
    <property type="chains" value="P/Q/R/S=493-512"/>
</dbReference>
<dbReference type="PDB" id="5NTW">
    <property type="method" value="X-ray"/>
    <property type="resolution" value="1.64 A"/>
    <property type="chains" value="P/Q/R/S=493-512"/>
</dbReference>
<dbReference type="PDB" id="5NU1">
    <property type="method" value="X-ray"/>
    <property type="resolution" value="1.85 A"/>
    <property type="chains" value="P/Q=493-512"/>
</dbReference>
<dbReference type="PDB" id="6FZU">
    <property type="method" value="X-ray"/>
    <property type="resolution" value="1.80 A"/>
    <property type="chains" value="P/Q=493-512"/>
</dbReference>
<dbReference type="PDB" id="6G05">
    <property type="method" value="X-ray"/>
    <property type="resolution" value="1.90 A"/>
    <property type="chains" value="P/Q=493-512"/>
</dbReference>
<dbReference type="PDB" id="6G07">
    <property type="method" value="X-ray"/>
    <property type="resolution" value="1.66 A"/>
    <property type="chains" value="P/Q/R/S=493-512"/>
</dbReference>
<dbReference type="PDB" id="9CWN">
    <property type="method" value="X-ray"/>
    <property type="resolution" value="2.70 A"/>
    <property type="chains" value="B=121-143"/>
</dbReference>
<dbReference type="PDBsum" id="2GPO"/>
<dbReference type="PDBsum" id="2GPP"/>
<dbReference type="PDBsum" id="4S14"/>
<dbReference type="PDBsum" id="4S15"/>
<dbReference type="PDBsum" id="5NTI"/>
<dbReference type="PDBsum" id="5NTN"/>
<dbReference type="PDBsum" id="5NTW"/>
<dbReference type="PDBsum" id="5NU1"/>
<dbReference type="PDBsum" id="6FZU"/>
<dbReference type="PDBsum" id="6G05"/>
<dbReference type="PDBsum" id="6G07"/>
<dbReference type="PDBsum" id="9CWN"/>
<dbReference type="SMR" id="P48552"/>
<dbReference type="BioGRID" id="113843">
    <property type="interactions" value="161"/>
</dbReference>
<dbReference type="CORUM" id="P48552"/>
<dbReference type="DIP" id="DIP-5964N"/>
<dbReference type="FunCoup" id="P48552">
    <property type="interactions" value="2605"/>
</dbReference>
<dbReference type="IntAct" id="P48552">
    <property type="interactions" value="112"/>
</dbReference>
<dbReference type="MINT" id="P48552"/>
<dbReference type="STRING" id="9606.ENSP00000327213"/>
<dbReference type="DrugBank" id="DB06884">
    <property type="generic name" value="4-HYDROXY-N'-(4-ISOPROPYLBENZYL)BENZOHYDRAZIDE"/>
</dbReference>
<dbReference type="GlyGen" id="P48552">
    <property type="glycosylation" value="2 sites, 1 O-linked glycan (2 sites)"/>
</dbReference>
<dbReference type="iPTMnet" id="P48552"/>
<dbReference type="PhosphoSitePlus" id="P48552"/>
<dbReference type="BioMuta" id="NRIP1"/>
<dbReference type="DMDM" id="9988061"/>
<dbReference type="jPOST" id="P48552"/>
<dbReference type="MassIVE" id="P48552"/>
<dbReference type="PaxDb" id="9606-ENSP00000383063"/>
<dbReference type="PeptideAtlas" id="P48552"/>
<dbReference type="ProteomicsDB" id="55908"/>
<dbReference type="Antibodypedia" id="5789">
    <property type="antibodies" value="254 antibodies from 33 providers"/>
</dbReference>
<dbReference type="DNASU" id="8204"/>
<dbReference type="Ensembl" id="ENST00000318948.7">
    <property type="protein sequence ID" value="ENSP00000327213.4"/>
    <property type="gene ID" value="ENSG00000180530.11"/>
</dbReference>
<dbReference type="Ensembl" id="ENST00000400199.5">
    <property type="protein sequence ID" value="ENSP00000383060.1"/>
    <property type="gene ID" value="ENSG00000180530.11"/>
</dbReference>
<dbReference type="Ensembl" id="ENST00000400202.5">
    <property type="protein sequence ID" value="ENSP00000383063.1"/>
    <property type="gene ID" value="ENSG00000180530.11"/>
</dbReference>
<dbReference type="GeneID" id="8204"/>
<dbReference type="KEGG" id="hsa:8204"/>
<dbReference type="MANE-Select" id="ENST00000318948.7">
    <property type="protein sequence ID" value="ENSP00000327213.4"/>
    <property type="RefSeq nucleotide sequence ID" value="NM_003489.4"/>
    <property type="RefSeq protein sequence ID" value="NP_003480.2"/>
</dbReference>
<dbReference type="UCSC" id="uc002yjx.2">
    <property type="organism name" value="human"/>
</dbReference>
<dbReference type="AGR" id="HGNC:8001"/>
<dbReference type="CTD" id="8204"/>
<dbReference type="DisGeNET" id="8204"/>
<dbReference type="GeneCards" id="NRIP1"/>
<dbReference type="HGNC" id="HGNC:8001">
    <property type="gene designation" value="NRIP1"/>
</dbReference>
<dbReference type="HPA" id="ENSG00000180530">
    <property type="expression patterns" value="Low tissue specificity"/>
</dbReference>
<dbReference type="MalaCards" id="NRIP1"/>
<dbReference type="MIM" id="602490">
    <property type="type" value="gene"/>
</dbReference>
<dbReference type="MIM" id="618270">
    <property type="type" value="phenotype"/>
</dbReference>
<dbReference type="neXtProt" id="NX_P48552"/>
<dbReference type="OpenTargets" id="ENSG00000180530"/>
<dbReference type="PharmGKB" id="PA31780"/>
<dbReference type="VEuPathDB" id="HostDB:ENSG00000180530"/>
<dbReference type="eggNOG" id="ENOG502QS1C">
    <property type="taxonomic scope" value="Eukaryota"/>
</dbReference>
<dbReference type="GeneTree" id="ENSGT00390000007999"/>
<dbReference type="HOGENOM" id="CLU_008553_0_0_1"/>
<dbReference type="InParanoid" id="P48552"/>
<dbReference type="OMA" id="SPPYACG"/>
<dbReference type="OrthoDB" id="9878150at2759"/>
<dbReference type="PAN-GO" id="P48552">
    <property type="GO annotations" value="10 GO annotations based on evolutionary models"/>
</dbReference>
<dbReference type="PhylomeDB" id="P48552"/>
<dbReference type="TreeFam" id="TF332210"/>
<dbReference type="PathwayCommons" id="P48552"/>
<dbReference type="Reactome" id="R-HSA-3899300">
    <property type="pathway name" value="SUMOylation of transcription cofactors"/>
</dbReference>
<dbReference type="Reactome" id="R-HSA-400253">
    <property type="pathway name" value="Circadian Clock"/>
</dbReference>
<dbReference type="Reactome" id="R-HSA-9018519">
    <property type="pathway name" value="Estrogen-dependent gene expression"/>
</dbReference>
<dbReference type="Reactome" id="R-HSA-9029558">
    <property type="pathway name" value="NR1H2 &amp; NR1H3 regulate gene expression linked to lipogenesis"/>
</dbReference>
<dbReference type="Reactome" id="R-HSA-9632974">
    <property type="pathway name" value="NR1H2 &amp; NR1H3 regulate gene expression linked to gluconeogenesis"/>
</dbReference>
<dbReference type="Reactome" id="R-HSA-9707616">
    <property type="pathway name" value="Heme signaling"/>
</dbReference>
<dbReference type="SignaLink" id="P48552"/>
<dbReference type="SIGNOR" id="P48552"/>
<dbReference type="BioGRID-ORCS" id="8204">
    <property type="hits" value="17 hits in 1162 CRISPR screens"/>
</dbReference>
<dbReference type="ChiTaRS" id="NRIP1">
    <property type="organism name" value="human"/>
</dbReference>
<dbReference type="EvolutionaryTrace" id="P48552"/>
<dbReference type="GeneWiki" id="NRIP1"/>
<dbReference type="GenomeRNAi" id="8204"/>
<dbReference type="Pharos" id="P48552">
    <property type="development level" value="Tbio"/>
</dbReference>
<dbReference type="PRO" id="PR:P48552"/>
<dbReference type="Proteomes" id="UP000005640">
    <property type="component" value="Chromosome 21"/>
</dbReference>
<dbReference type="RNAct" id="P48552">
    <property type="molecule type" value="protein"/>
</dbReference>
<dbReference type="Bgee" id="ENSG00000180530">
    <property type="expression patterns" value="Expressed in corpus epididymis and 212 other cell types or tissues"/>
</dbReference>
<dbReference type="ExpressionAtlas" id="P48552">
    <property type="expression patterns" value="baseline and differential"/>
</dbReference>
<dbReference type="GO" id="GO:0000785">
    <property type="term" value="C:chromatin"/>
    <property type="evidence" value="ECO:0000314"/>
    <property type="project" value="BHF-UCL"/>
</dbReference>
<dbReference type="GO" id="GO:0005829">
    <property type="term" value="C:cytosol"/>
    <property type="evidence" value="ECO:0000314"/>
    <property type="project" value="HPA"/>
</dbReference>
<dbReference type="GO" id="GO:0001650">
    <property type="term" value="C:fibrillar center"/>
    <property type="evidence" value="ECO:0000314"/>
    <property type="project" value="HPA"/>
</dbReference>
<dbReference type="GO" id="GO:0000118">
    <property type="term" value="C:histone deacetylase complex"/>
    <property type="evidence" value="ECO:0007669"/>
    <property type="project" value="Ensembl"/>
</dbReference>
<dbReference type="GO" id="GO:0016607">
    <property type="term" value="C:nuclear speck"/>
    <property type="evidence" value="ECO:0007669"/>
    <property type="project" value="Ensembl"/>
</dbReference>
<dbReference type="GO" id="GO:0005730">
    <property type="term" value="C:nucleolus"/>
    <property type="evidence" value="ECO:0000314"/>
    <property type="project" value="HPA"/>
</dbReference>
<dbReference type="GO" id="GO:0005654">
    <property type="term" value="C:nucleoplasm"/>
    <property type="evidence" value="ECO:0000314"/>
    <property type="project" value="HPA"/>
</dbReference>
<dbReference type="GO" id="GO:0005634">
    <property type="term" value="C:nucleus"/>
    <property type="evidence" value="ECO:0000314"/>
    <property type="project" value="UniProtKB"/>
</dbReference>
<dbReference type="GO" id="GO:0042826">
    <property type="term" value="F:histone deacetylase binding"/>
    <property type="evidence" value="ECO:0007669"/>
    <property type="project" value="Ensembl"/>
</dbReference>
<dbReference type="GO" id="GO:0030331">
    <property type="term" value="F:nuclear estrogen receptor binding"/>
    <property type="evidence" value="ECO:0000353"/>
    <property type="project" value="UniProtKB"/>
</dbReference>
<dbReference type="GO" id="GO:0035259">
    <property type="term" value="F:nuclear glucocorticoid receptor binding"/>
    <property type="evidence" value="ECO:0000353"/>
    <property type="project" value="UniProtKB"/>
</dbReference>
<dbReference type="GO" id="GO:0016922">
    <property type="term" value="F:nuclear receptor binding"/>
    <property type="evidence" value="ECO:0000353"/>
    <property type="project" value="UniProtKB"/>
</dbReference>
<dbReference type="GO" id="GO:0046965">
    <property type="term" value="F:nuclear retinoid X receptor binding"/>
    <property type="evidence" value="ECO:0000318"/>
    <property type="project" value="GO_Central"/>
</dbReference>
<dbReference type="GO" id="GO:0000978">
    <property type="term" value="F:RNA polymerase II cis-regulatory region sequence-specific DNA binding"/>
    <property type="evidence" value="ECO:0000314"/>
    <property type="project" value="UniProtKB"/>
</dbReference>
<dbReference type="GO" id="GO:0005102">
    <property type="term" value="F:signaling receptor binding"/>
    <property type="evidence" value="ECO:0007669"/>
    <property type="project" value="Ensembl"/>
</dbReference>
<dbReference type="GO" id="GO:0003713">
    <property type="term" value="F:transcription coactivator activity"/>
    <property type="evidence" value="ECO:0000314"/>
    <property type="project" value="UniProtKB"/>
</dbReference>
<dbReference type="GO" id="GO:0003714">
    <property type="term" value="F:transcription corepressor activity"/>
    <property type="evidence" value="ECO:0000314"/>
    <property type="project" value="UniProtKB"/>
</dbReference>
<dbReference type="GO" id="GO:0071392">
    <property type="term" value="P:cellular response to estradiol stimulus"/>
    <property type="evidence" value="ECO:0000314"/>
    <property type="project" value="BHF-UCL"/>
</dbReference>
<dbReference type="GO" id="GO:0032922">
    <property type="term" value="P:circadian regulation of gene expression"/>
    <property type="evidence" value="ECO:0000315"/>
    <property type="project" value="UniProtKB"/>
</dbReference>
<dbReference type="GO" id="GO:0007623">
    <property type="term" value="P:circadian rhythm"/>
    <property type="evidence" value="ECO:0000270"/>
    <property type="project" value="UniProtKB"/>
</dbReference>
<dbReference type="GO" id="GO:0019915">
    <property type="term" value="P:lipid storage"/>
    <property type="evidence" value="ECO:0007669"/>
    <property type="project" value="Ensembl"/>
</dbReference>
<dbReference type="GO" id="GO:0000122">
    <property type="term" value="P:negative regulation of transcription by RNA polymerase II"/>
    <property type="evidence" value="ECO:0000314"/>
    <property type="project" value="UniProtKB"/>
</dbReference>
<dbReference type="GO" id="GO:0001543">
    <property type="term" value="P:ovarian follicle rupture"/>
    <property type="evidence" value="ECO:0007669"/>
    <property type="project" value="Ensembl"/>
</dbReference>
<dbReference type="GO" id="GO:0045944">
    <property type="term" value="P:positive regulation of transcription by RNA polymerase II"/>
    <property type="evidence" value="ECO:0000314"/>
    <property type="project" value="UniProtKB"/>
</dbReference>
<dbReference type="IDEAL" id="IID00050"/>
<dbReference type="InterPro" id="IPR026649">
    <property type="entry name" value="NRIP1"/>
</dbReference>
<dbReference type="InterPro" id="IPR031405">
    <property type="entry name" value="NRIP1_RD1"/>
</dbReference>
<dbReference type="InterPro" id="IPR031406">
    <property type="entry name" value="NRIP1_RD2"/>
</dbReference>
<dbReference type="InterPro" id="IPR031407">
    <property type="entry name" value="NRIP1_RD3"/>
</dbReference>
<dbReference type="InterPro" id="IPR031408">
    <property type="entry name" value="NRIP1_RD4"/>
</dbReference>
<dbReference type="PANTHER" id="PTHR15088">
    <property type="entry name" value="NUCLEAR FACTOR RIP140"/>
    <property type="match status" value="1"/>
</dbReference>
<dbReference type="PANTHER" id="PTHR15088:SF0">
    <property type="entry name" value="NUCLEAR RECEPTOR-INTERACTING PROTEIN 1"/>
    <property type="match status" value="1"/>
</dbReference>
<dbReference type="Pfam" id="PF15687">
    <property type="entry name" value="NRIP1_repr_1"/>
    <property type="match status" value="1"/>
</dbReference>
<dbReference type="Pfam" id="PF15688">
    <property type="entry name" value="NRIP1_repr_2"/>
    <property type="match status" value="1"/>
</dbReference>
<dbReference type="Pfam" id="PF15689">
    <property type="entry name" value="NRIP1_repr_3"/>
    <property type="match status" value="1"/>
</dbReference>
<dbReference type="Pfam" id="PF15690">
    <property type="entry name" value="NRIP1_repr_4"/>
    <property type="match status" value="1"/>
</dbReference>
<protein>
    <recommendedName>
        <fullName>Nuclear receptor-interacting protein 1</fullName>
    </recommendedName>
    <alternativeName>
        <fullName>Nuclear factor RIP140</fullName>
    </alternativeName>
    <alternativeName>
        <fullName>Receptor-interacting protein 140</fullName>
    </alternativeName>
</protein>
<proteinExistence type="evidence at protein level"/>
<reference key="1">
    <citation type="journal article" date="1995" name="EMBO J.">
        <title>Nuclear factor RIP140 modulates transcriptional activation by the estrogen receptor.</title>
        <authorList>
            <person name="Cavailles V."/>
            <person name="Dauvois S."/>
            <person name="L'Horset F."/>
            <person name="Lopez G."/>
            <person name="Hoare S."/>
            <person name="Kushner P.J."/>
            <person name="Parker M.G."/>
        </authorList>
    </citation>
    <scope>NUCLEOTIDE SEQUENCE [MRNA]</scope>
    <scope>FUNCTION</scope>
    <scope>INTERACTION WITH ESR1</scope>
    <scope>SUBCELLULAR LOCATION</scope>
    <scope>VARIANT GLY-448</scope>
    <source>
        <tissue>Mammary gland</tissue>
    </source>
</reference>
<reference key="2">
    <citation type="journal article" date="2000" name="Nature">
        <title>The DNA sequence of human chromosome 21.</title>
        <authorList>
            <person name="Hattori M."/>
            <person name="Fujiyama A."/>
            <person name="Taylor T.D."/>
            <person name="Watanabe H."/>
            <person name="Yada T."/>
            <person name="Park H.-S."/>
            <person name="Toyoda A."/>
            <person name="Ishii K."/>
            <person name="Totoki Y."/>
            <person name="Choi D.-K."/>
            <person name="Groner Y."/>
            <person name="Soeda E."/>
            <person name="Ohki M."/>
            <person name="Takagi T."/>
            <person name="Sakaki Y."/>
            <person name="Taudien S."/>
            <person name="Blechschmidt K."/>
            <person name="Polley A."/>
            <person name="Menzel U."/>
            <person name="Delabar J."/>
            <person name="Kumpf K."/>
            <person name="Lehmann R."/>
            <person name="Patterson D."/>
            <person name="Reichwald K."/>
            <person name="Rump A."/>
            <person name="Schillhabel M."/>
            <person name="Schudy A."/>
            <person name="Zimmermann W."/>
            <person name="Rosenthal A."/>
            <person name="Kudoh J."/>
            <person name="Shibuya K."/>
            <person name="Kawasaki K."/>
            <person name="Asakawa S."/>
            <person name="Shintani A."/>
            <person name="Sasaki T."/>
            <person name="Nagamine K."/>
            <person name="Mitsuyama S."/>
            <person name="Antonarakis S.E."/>
            <person name="Minoshima S."/>
            <person name="Shimizu N."/>
            <person name="Nordsiek G."/>
            <person name="Hornischer K."/>
            <person name="Brandt P."/>
            <person name="Scharfe M."/>
            <person name="Schoen O."/>
            <person name="Desario A."/>
            <person name="Reichelt J."/>
            <person name="Kauer G."/>
            <person name="Bloecker H."/>
            <person name="Ramser J."/>
            <person name="Beck A."/>
            <person name="Klages S."/>
            <person name="Hennig S."/>
            <person name="Riesselmann L."/>
            <person name="Dagand E."/>
            <person name="Wehrmeyer S."/>
            <person name="Borzym K."/>
            <person name="Gardiner K."/>
            <person name="Nizetic D."/>
            <person name="Francis F."/>
            <person name="Lehrach H."/>
            <person name="Reinhardt R."/>
            <person name="Yaspo M.-L."/>
        </authorList>
    </citation>
    <scope>NUCLEOTIDE SEQUENCE [LARGE SCALE GENOMIC DNA]</scope>
</reference>
<reference key="3">
    <citation type="journal article" date="2004" name="Genome Res.">
        <title>The status, quality, and expansion of the NIH full-length cDNA project: the Mammalian Gene Collection (MGC).</title>
        <authorList>
            <consortium name="The MGC Project Team"/>
        </authorList>
    </citation>
    <scope>NUCLEOTIDE SEQUENCE [LARGE SCALE MRNA]</scope>
    <source>
        <tissue>Skin</tissue>
    </source>
</reference>
<reference key="4">
    <citation type="journal article" date="1998" name="J. Biol. Chem.">
        <title>Regulation of peroxisome proliferator-activated receptor alpha-induced transactivation by the nuclear orphan receptor TAK1/TR4.</title>
        <authorList>
            <person name="Yan Z.H."/>
            <person name="Karam W.G."/>
            <person name="Staudinger J.L."/>
            <person name="Medvedev A."/>
            <person name="Ghanayem B.I."/>
            <person name="Jetten A.M."/>
        </authorList>
    </citation>
    <scope>INTERACTION WITH NR2C2</scope>
</reference>
<reference key="5">
    <citation type="journal article" date="1999" name="J. Biol. Chem.">
        <title>Receptor interacting protein RIP140 inhibits both positive and negative gene regulation by glucocorticoids.</title>
        <authorList>
            <person name="Subramaniam N."/>
            <person name="Treuter E."/>
            <person name="Okret S."/>
        </authorList>
    </citation>
    <scope>FUNCTION</scope>
    <scope>INTERACTION WITH NR3C1</scope>
</reference>
<reference key="6">
    <citation type="journal article" date="2001" name="Mol. Cell. Biol.">
        <title>Acetylation of nuclear hormone receptor-interacting protein RIP140 regulates binding of the transcriptional corepressor CtBP.</title>
        <authorList>
            <person name="Vo N."/>
            <person name="Fjeld C."/>
            <person name="Goodman R.H."/>
        </authorList>
    </citation>
    <scope>FUNCTION</scope>
    <scope>INTERACTION WITH CTBP1</scope>
    <scope>MUTAGENESIS OF 440-PRO--LEU-443 AND LYS-446</scope>
    <scope>ACETYLATION AT LYS-446</scope>
</reference>
<reference key="7">
    <citation type="journal article" date="2001" name="Mol. Endocrinol.">
        <title>Regulation of glucocorticoid receptor activity by 14-3-3-dependent intracellular relocalization of the corepressor RIP140.</title>
        <authorList>
            <person name="Zilliacus J."/>
            <person name="Holter E."/>
            <person name="Wakui H."/>
            <person name="Tazawa H."/>
            <person name="Treuter E."/>
            <person name="Gustafsson J.-A."/>
        </authorList>
    </citation>
    <scope>INTERACTION WITH NR3C1 AND YWHAH</scope>
    <scope>IDENTIFICATION IN A COMPLEX WITH NR3C1 AND YWHAH</scope>
    <scope>SUBCELLULAR LOCATION</scope>
</reference>
<reference key="8">
    <citation type="journal article" date="2001" name="Mol. Endocrinol.">
        <title>A new human MR splice variant is a ligand-independent transactivator modulating corticosteroid action.</title>
        <authorList>
            <person name="Zennaro M.-C."/>
            <person name="Souque A."/>
            <person name="Viengchareun S."/>
            <person name="Poisson E."/>
            <person name="Lombes M."/>
        </authorList>
    </citation>
    <scope>FUNCTION</scope>
    <scope>INTERACTION WITH NR3C2</scope>
</reference>
<reference key="9">
    <citation type="journal article" date="2003" name="Mol. Cell. Biol.">
        <title>Regulation of subnuclear localization is associated with a mechanism for nuclear receptor corepression by RIP140.</title>
        <authorList>
            <person name="Tazawa H."/>
            <person name="Osman W."/>
            <person name="Shoji Y."/>
            <person name="Treuter E."/>
            <person name="Gustafsson J.-A."/>
            <person name="Zilliacus J."/>
        </authorList>
    </citation>
    <scope>INTERACTION WITH NR3C1</scope>
    <scope>SUBCELLULAR LOCATION</scope>
</reference>
<reference key="10">
    <citation type="journal article" date="2003" name="Mol. Endocrinol.">
        <title>Receptor-interacting protein 140 binds c-Jun and inhibits estradiol-induced activator protein-1 activity by reversing glucocorticoid receptor-interacting protein 1 effect.</title>
        <authorList>
            <person name="Teyssier C."/>
            <person name="Belguise K."/>
            <person name="Galtier F."/>
            <person name="Cavailles V."/>
            <person name="Chalbos D."/>
        </authorList>
    </citation>
    <scope>FUNCTION</scope>
    <scope>INTERACTION WITH ESR1; FOS AND JUN</scope>
</reference>
<reference key="11">
    <citation type="journal article" date="2004" name="J. Biol. Chem.">
        <title>Characterization of four autonomous repression domains in the corepressor receptor interacting protein 140.</title>
        <authorList>
            <person name="Christian M."/>
            <person name="Tullet J.M.A."/>
            <person name="Parker M.G."/>
        </authorList>
    </citation>
    <scope>INTERACTION WITH CTBP1 AND CTBP2</scope>
    <scope>MUTAGENESIS OF 442-ASP--LEU-443; 567-ASN--LEU-568 AND 948-ASP--LEU-949</scope>
    <scope>IDENTIFICATION OF REPRESSION DOMAINS</scope>
</reference>
<reference key="12">
    <citation type="journal article" date="2004" name="Nucleic Acids Res.">
        <title>Multiple domains of the receptor-interacting protein 140 contribute to transcription inhibition.</title>
        <authorList>
            <person name="Castet A."/>
            <person name="Boulahtouf A."/>
            <person name="Versini G."/>
            <person name="Bonnet S."/>
            <person name="Augereau P."/>
            <person name="Vignon F."/>
            <person name="Khochbin S."/>
            <person name="Jalaguier S."/>
            <person name="Cavailles V."/>
        </authorList>
    </citation>
    <scope>FUNCTION</scope>
    <scope>INTERACTION WITH CTBP1; CTBP2; HDAC1; HDAC2; HDAC5 AND HDAC6</scope>
    <scope>MUTAGENESIS OF 442-ASP--LEU-443 AND 567-ASN--LEU-568</scope>
    <scope>SUBCELLULAR LOCATION</scope>
</reference>
<reference key="13">
    <citation type="journal article" date="2006" name="Mol. Cell. Proteomics">
        <title>Modulation of testicular receptor 4 activity by mitogen-activated protein kinase-mediated phosphorylation.</title>
        <authorList>
            <person name="Huq M.D."/>
            <person name="Gupta P."/>
            <person name="Tsai N.P."/>
            <person name="Wei L.N."/>
        </authorList>
    </citation>
    <scope>INTERACTION WITH NR2C2</scope>
</reference>
<reference key="14">
    <citation type="journal article" date="2006" name="Nucleic Acids Res.">
        <title>ZNF366 is an estrogen receptor corepressor that acts through CtBP and histone deacetylases.</title>
        <authorList>
            <person name="Lopez-Garcia J."/>
            <person name="Periyasamy M."/>
            <person name="Thomas R.S."/>
            <person name="Christian M."/>
            <person name="Leao M."/>
            <person name="Jat P."/>
            <person name="Kindle K.B."/>
            <person name="Heery D.M."/>
            <person name="Parker M.G."/>
            <person name="Buluwela L."/>
            <person name="Kamalati T."/>
            <person name="Ali S."/>
        </authorList>
    </citation>
    <scope>INTERACTION WITH ZNF366</scope>
</reference>
<reference key="15">
    <citation type="journal article" date="2011" name="J. Biol. Rhythms">
        <title>Modulation of clock gene expression by the transcriptional coregulator receptor interacting protein 140 (RIP140).</title>
        <authorList>
            <person name="Poliandri A.H."/>
            <person name="Gamsby J.J."/>
            <person name="Christian M."/>
            <person name="Spinella M.J."/>
            <person name="Loros J.J."/>
            <person name="Dunlap J.C."/>
            <person name="Parker M.G."/>
        </authorList>
    </citation>
    <scope>FUNCTION</scope>
    <scope>INTERACTION WITH RORA</scope>
    <scope>INDUCTION</scope>
</reference>
<reference key="16">
    <citation type="journal article" date="2013" name="J. Proteome Res.">
        <title>Toward a comprehensive characterization of a human cancer cell phosphoproteome.</title>
        <authorList>
            <person name="Zhou H."/>
            <person name="Di Palma S."/>
            <person name="Preisinger C."/>
            <person name="Peng M."/>
            <person name="Polat A.N."/>
            <person name="Heck A.J."/>
            <person name="Mohammed S."/>
        </authorList>
    </citation>
    <scope>PHOSPHORYLATION [LARGE SCALE ANALYSIS] AT SER-564 AND SER-807</scope>
    <scope>IDENTIFICATION BY MASS SPECTROMETRY [LARGE SCALE ANALYSIS]</scope>
    <source>
        <tissue>Erythroleukemia</tissue>
    </source>
</reference>
<reference key="17">
    <citation type="journal article" date="2014" name="J. Proteomics">
        <title>An enzyme assisted RP-RPLC approach for in-depth analysis of human liver phosphoproteome.</title>
        <authorList>
            <person name="Bian Y."/>
            <person name="Song C."/>
            <person name="Cheng K."/>
            <person name="Dong M."/>
            <person name="Wang F."/>
            <person name="Huang J."/>
            <person name="Sun D."/>
            <person name="Wang L."/>
            <person name="Ye M."/>
            <person name="Zou H."/>
        </authorList>
    </citation>
    <scope>PHOSPHORYLATION [LARGE SCALE ANALYSIS] AT SER-218; SER-671 AND SER-807</scope>
    <scope>IDENTIFICATION BY MASS SPECTROMETRY [LARGE SCALE ANALYSIS]</scope>
    <source>
        <tissue>Liver</tissue>
    </source>
</reference>
<reference key="18">
    <citation type="journal article" date="2014" name="Nat. Struct. Mol. Biol.">
        <title>Uncovering global SUMOylation signaling networks in a site-specific manner.</title>
        <authorList>
            <person name="Hendriks I.A."/>
            <person name="D'Souza R.C."/>
            <person name="Yang B."/>
            <person name="Verlaan-de Vries M."/>
            <person name="Mann M."/>
            <person name="Vertegaal A.C."/>
        </authorList>
    </citation>
    <scope>SUMOYLATION [LARGE SCALE ANALYSIS] AT LYS-756 AND LYS-1105</scope>
    <scope>IDENTIFICATION BY MASS SPECTROMETRY [LARGE SCALE ANALYSIS]</scope>
</reference>
<reference key="19">
    <citation type="journal article" date="2017" name="J. Am. Soc. Nephrol.">
        <title>A dominant mutation in nuclear receptor interacting protein 1 causes urinary tract malformations via dysregulation of retinoic acid signaling.</title>
        <authorList>
            <person name="Vivante A."/>
            <person name="Mann N."/>
            <person name="Yonath H."/>
            <person name="Weiss A.C."/>
            <person name="Getwan M."/>
            <person name="Kaminski M.M."/>
            <person name="Bohnenpoll T."/>
            <person name="Teyssier C."/>
            <person name="Chen J."/>
            <person name="Shril S."/>
            <person name="van der Ven A.T."/>
            <person name="Ityel H."/>
            <person name="Schmidt J.M."/>
            <person name="Widmeier E."/>
            <person name="Bauer S.B."/>
            <person name="Sanna-Cherchi S."/>
            <person name="Gharavi A.G."/>
            <person name="Lu W."/>
            <person name="Magen D."/>
            <person name="Shukrun R."/>
            <person name="Lifton R.P."/>
            <person name="Tasic V."/>
            <person name="Stanescu H.C."/>
            <person name="Cavailles V."/>
            <person name="Kleta R."/>
            <person name="Anikster Y."/>
            <person name="Dekel B."/>
            <person name="Kispert A."/>
            <person name="Lienkamp S.S."/>
            <person name="Hildebrandt F."/>
        </authorList>
    </citation>
    <scope>FUNCTION</scope>
    <scope>INVOLVEMENT IN CAKUT3</scope>
</reference>
<reference key="20">
    <citation type="journal article" date="2017" name="Nat. Struct. Mol. Biol.">
        <title>Site-specific mapping of the human SUMO proteome reveals co-modification with phosphorylation.</title>
        <authorList>
            <person name="Hendriks I.A."/>
            <person name="Lyon D."/>
            <person name="Young C."/>
            <person name="Jensen L.J."/>
            <person name="Vertegaal A.C."/>
            <person name="Nielsen M.L."/>
        </authorList>
    </citation>
    <scope>SUMOYLATION [LARGE SCALE ANALYSIS] AT LYS-111; LYS-170; LYS-195; LYS-198; LYS-372; LYS-508; LYS-756; LYS-802; LYS-850; LYS-901; LYS-931; LYS-1105; LYS-1115 AND LYS-1154</scope>
    <scope>IDENTIFICATION BY MASS SPECTROMETRY [LARGE SCALE ANALYSIS]</scope>
</reference>
<reference key="21">
    <citation type="journal article" date="2018" name="J. Am. Soc. Nephrol.">
        <title>Whole-exome sequencing identifies causative mutations in families with congenital anomalies of the kidney and urinary tract.</title>
        <authorList>
            <person name="van der Ven A.T."/>
            <person name="Connaughton D.M."/>
            <person name="Ityel H."/>
            <person name="Mann N."/>
            <person name="Nakayama M."/>
            <person name="Chen J."/>
            <person name="Vivante A."/>
            <person name="Hwang D.Y."/>
            <person name="Schulz J."/>
            <person name="Braun D.A."/>
            <person name="Schmidt J.M."/>
            <person name="Schapiro D."/>
            <person name="Schneider R."/>
            <person name="Warejko J.K."/>
            <person name="Daga A."/>
            <person name="Majmundar A.J."/>
            <person name="Tan W."/>
            <person name="Jobst-Schwan T."/>
            <person name="Hermle T."/>
            <person name="Widmeier E."/>
            <person name="Ashraf S."/>
            <person name="Amar A."/>
            <person name="Hoogstraaten C.A."/>
            <person name="Hugo H."/>
            <person name="Kitzler T.M."/>
            <person name="Kause F."/>
            <person name="Kolvenbach C.M."/>
            <person name="Dai R."/>
            <person name="Spaneas L."/>
            <person name="Amann K."/>
            <person name="Stein D.R."/>
            <person name="Baum M.A."/>
            <person name="Somers M.J.G."/>
            <person name="Rodig N.M."/>
            <person name="Ferguson M.A."/>
            <person name="Traum A.Z."/>
            <person name="Daouk G.H."/>
            <person name="Bogdanovic R."/>
            <person name="Stajic N."/>
            <person name="Soliman N.A."/>
            <person name="Kari J.A."/>
            <person name="El Desoky S."/>
            <person name="Fathy H.M."/>
            <person name="Milosevic D."/>
            <person name="Al-Saffar M."/>
            <person name="Awad H.S."/>
            <person name="Eid L.A."/>
            <person name="Selvin A."/>
            <person name="Senguttuvan P."/>
            <person name="Sanna-Cherchi S."/>
            <person name="Rehm H.L."/>
            <person name="MacArthur D.G."/>
            <person name="Lek M."/>
            <person name="Laricchia K.M."/>
            <person name="Wilson M.W."/>
            <person name="Mane S.M."/>
            <person name="Lifton R.P."/>
            <person name="Lee R.S."/>
            <person name="Bauer S.B."/>
            <person name="Lu W."/>
            <person name="Reutter H.M."/>
            <person name="Tasic V."/>
            <person name="Shril S."/>
            <person name="Hildebrandt F."/>
        </authorList>
    </citation>
    <scope>INVOLVEMENT IN CAKUT3</scope>
</reference>
<reference key="22">
    <citation type="journal article" date="2006" name="J. Biol. Chem.">
        <title>X-ray crystal structures of the estrogen-related receptor-gamma ligand binding domain in three functional states reveal the molecular basis of small molecule regulation.</title>
        <authorList>
            <person name="Wang L."/>
            <person name="Zuercher W.J."/>
            <person name="Consler T.G."/>
            <person name="Lambert M.H."/>
            <person name="Miller A.B."/>
            <person name="Orband-Miller L.A."/>
            <person name="McKee D.D."/>
            <person name="Willson T.M."/>
            <person name="Nolte R.T."/>
        </authorList>
    </citation>
    <scope>X-RAY CRYSTALLOGRAPHY (1.95 ANGSTROMS) OF 366-390 IN COMPLEX WITH ESRRG</scope>
</reference>
<reference key="23">
    <citation type="journal article" date="2005" name="J. Exp. Clin. Assist. Reprod.">
        <title>Preliminary molecular genetic analysis of the receptor interacting protein 140 (RIP140) in women affected by endometriosis.</title>
        <authorList>
            <person name="Caballero V."/>
            <person name="Ruiz R."/>
            <person name="Sainz J.A."/>
            <person name="Cruz M."/>
            <person name="Lopez-Nevot M.A."/>
            <person name="Galan J.J."/>
            <person name="Real L.M."/>
            <person name="de Castro F."/>
            <person name="Lopez-Villaverde V."/>
            <person name="Ruiz A."/>
        </authorList>
    </citation>
    <scope>VARIANTS ARG-221; VAL-441; GLY-448; LEU-803 AND PHE-1079</scope>
</reference>
<keyword id="KW-0002">3D-structure</keyword>
<keyword id="KW-0007">Acetylation</keyword>
<keyword id="KW-0010">Activator</keyword>
<keyword id="KW-0090">Biological rhythms</keyword>
<keyword id="KW-1017">Isopeptide bond</keyword>
<keyword id="KW-0539">Nucleus</keyword>
<keyword id="KW-0597">Phosphoprotein</keyword>
<keyword id="KW-1267">Proteomics identification</keyword>
<keyword id="KW-1185">Reference proteome</keyword>
<keyword id="KW-0677">Repeat</keyword>
<keyword id="KW-0804">Transcription</keyword>
<keyword id="KW-0805">Transcription regulation</keyword>
<keyword id="KW-0832">Ubl conjugation</keyword>
<gene>
    <name type="primary">NRIP1</name>
</gene>
<comment type="function">
    <text evidence="2 5 7 8 9 12 17 18 20">Modulates transcriptional activation by steroid receptors such as NR3C1, NR3C2 and ESR1. Also modulates transcriptional repression by nuclear hormone receptors. Positive regulator of the circadian clock gene expression: stimulates transcription of BMAL1, CLOCK and CRY1 by acting as a coactivator for RORA and RORC. Involved in the regulation of ovarian function (By similarity). Plays a role in renal development (PubMed:28381549).</text>
</comment>
<comment type="subunit">
    <text evidence="2 5 6 7 8 9 10 11 12 14 15 16 17 20 21">Interacts with RARA and RXRB homodimers and RARA/RXRB heterodimers in the presence of ligand. Interacts with HDAC1 and HDAC3 via its N-terminal domain. Interacts with NR2C1 (sumoylated form and via the ligand-binding domain); the interaction results in promoting the repressor activity of NR2C1 (By similarity). Interacts with CTBP1, CTBP2, ESR1, HDAC1, HDAC2, HDAC5, HDAC6, NR2C2, NR3C1, NR3C2, YWHAH, JUN and FOS. Found in a complex with both NR3C1 and YWHAH. Interacts with ZNF366. Interacts with RORA.</text>
</comment>
<comment type="interaction">
    <interactant intactId="EBI-746484">
        <id>P48552</id>
    </interactant>
    <interactant intactId="EBI-351829">
        <id>O15145</id>
        <label>ARPC3</label>
    </interactant>
    <organismsDiffer>false</organismsDiffer>
    <experiments>3</experiments>
</comment>
<comment type="interaction">
    <interactant intactId="EBI-746484">
        <id>P48552</id>
    </interactant>
    <interactant intactId="EBI-739624">
        <id>Q8NHQ1</id>
        <label>CEP70</label>
    </interactant>
    <organismsDiffer>false</organismsDiffer>
    <experiments>4</experiments>
</comment>
<comment type="interaction">
    <interactant intactId="EBI-746484">
        <id>P48552</id>
    </interactant>
    <interactant intactId="EBI-908846">
        <id>Q13363</id>
        <label>CTBP1</label>
    </interactant>
    <organismsDiffer>false</organismsDiffer>
    <experiments>3</experiments>
</comment>
<comment type="interaction">
    <interactant intactId="EBI-746484">
        <id>P48552</id>
    </interactant>
    <interactant intactId="EBI-719459">
        <id>P26358</id>
        <label>DNMT1</label>
    </interactant>
    <organismsDiffer>false</organismsDiffer>
    <experiments>3</experiments>
</comment>
<comment type="interaction">
    <interactant intactId="EBI-746484">
        <id>P48552</id>
    </interactant>
    <interactant intactId="EBI-12001340">
        <id>P62508-3</id>
        <label>ESRRG</label>
    </interactant>
    <organismsDiffer>false</organismsDiffer>
    <experiments>3</experiments>
</comment>
<comment type="interaction">
    <interactant intactId="EBI-746484">
        <id>P48552</id>
    </interactant>
    <interactant intactId="EBI-912547">
        <id>Q13642</id>
        <label>FHL1</label>
    </interactant>
    <organismsDiffer>false</organismsDiffer>
    <experiments>6</experiments>
</comment>
<comment type="interaction">
    <interactant intactId="EBI-746484">
        <id>P48552</id>
    </interactant>
    <interactant intactId="EBI-618309">
        <id>Q08379</id>
        <label>GOLGA2</label>
    </interactant>
    <organismsDiffer>false</organismsDiffer>
    <experiments>3</experiments>
</comment>
<comment type="interaction">
    <interactant intactId="EBI-746484">
        <id>P48552</id>
    </interactant>
    <interactant intactId="EBI-11519926">
        <id>Q6PI77</id>
        <label>GPRASP3</label>
    </interactant>
    <organismsDiffer>false</organismsDiffer>
    <experiments>3</experiments>
</comment>
<comment type="interaction">
    <interactant intactId="EBI-746484">
        <id>P48552</id>
    </interactant>
    <interactant intactId="EBI-607682">
        <id>O15379</id>
        <label>HDAC3</label>
    </interactant>
    <organismsDiffer>false</organismsDiffer>
    <experiments>2</experiments>
</comment>
<comment type="interaction">
    <interactant intactId="EBI-746484">
        <id>P48552</id>
    </interactant>
    <interactant intactId="EBI-740738">
        <id>O95751</id>
        <label>LDOC1</label>
    </interactant>
    <organismsDiffer>false</organismsDiffer>
    <experiments>3</experiments>
</comment>
<comment type="interaction">
    <interactant intactId="EBI-746484">
        <id>P48552</id>
    </interactant>
    <interactant intactId="EBI-2692890">
        <id>Q96KN3</id>
        <label>PKNOX2</label>
    </interactant>
    <organismsDiffer>false</organismsDiffer>
    <experiments>3</experiments>
</comment>
<comment type="interaction">
    <interactant intactId="EBI-746484">
        <id>P48552</id>
    </interactant>
    <interactant intactId="EBI-78738">
        <id>Q99873</id>
        <label>PRMT1</label>
    </interactant>
    <organismsDiffer>false</organismsDiffer>
    <experiments>4</experiments>
</comment>
<comment type="interaction">
    <interactant intactId="EBI-746484">
        <id>P48552</id>
    </interactant>
    <interactant intactId="EBI-413374">
        <id>P10276</id>
        <label>RARA</label>
    </interactant>
    <organismsDiffer>false</organismsDiffer>
    <experiments>4</experiments>
</comment>
<comment type="interaction">
    <interactant intactId="EBI-746484">
        <id>P48552</id>
    </interactant>
    <interactant intactId="EBI-10197061">
        <id>P10276-2</id>
        <label>RARA</label>
    </interactant>
    <organismsDiffer>false</organismsDiffer>
    <experiments>3</experiments>
</comment>
<comment type="interaction">
    <interactant intactId="EBI-746484">
        <id>P48552</id>
    </interactant>
    <interactant intactId="EBI-2813661">
        <id>Q8N895</id>
        <label>ZNF366</label>
    </interactant>
    <organismsDiffer>false</organismsDiffer>
    <experiments>2</experiments>
</comment>
<comment type="subcellular location">
    <subcellularLocation>
        <location evidence="6 10 12 20">Nucleus</location>
    </subcellularLocation>
    <text>Localized to discrete foci and redistributes to larger nuclear domains upon binding to ligand-bound NR3C1.</text>
</comment>
<comment type="induction">
    <text evidence="17">Expressed in a circadian manner in the liver (at protein level).</text>
</comment>
<comment type="domain">
    <text evidence="1">Contains 9 Leu-Xaa-Xaa-Leu-Leu (LXXLL) motifs, which have different affinities for nuclear receptors. The C-terminal LTKTNPILYYMLQK motif is required for ligand-dependent interaction with RAAR and RXRB homodimers and heterodimers, for the corepressor activity, and for the formation of an HDAC3 complex with RARA/RXRB (By similarity). Contains at least four autonomous repression domains (RD1-4). RD1 functions via a histone deacetylase (HDAC)-independent mechanism, whereas RD2, RD3 and RD4 can function by HDAC-dependent or independent mechanisms, depending on cell type. RD2 is dependent on CTBP binding.</text>
</comment>
<comment type="PTM">
    <text evidence="1 7">Acetylation regulates its nuclear translocation and corepressive activity (By similarity). Acetylation abolishes interaction with CTBP1. Phosphorylation enhances interaction with YWHAH.</text>
</comment>
<comment type="disease" evidence="18 19">
    <disease id="DI-05447">
        <name>Congenital anomalies of kidney and urinary tract 3</name>
        <acronym>CAKUT3</acronym>
        <description>A disorder encompassing a broad spectrum of renal and urinary tract malformations that include renal agenesis, kidney hypodysplasia, multicystic kidney dysplasia, duplex collecting system, posterior urethral valves and ureter abnormalities. Congenital anomalies of kidney and urinary tract are the commonest cause of chronic kidney disease in children. CAKUT3 inheritance is autosomal dominant.</description>
        <dbReference type="MIM" id="618270"/>
    </disease>
    <text>The disease is caused by variants affecting the gene represented in this entry.</text>
</comment>
<comment type="online information" name="Atlas of Genetics and Cytogenetics in Oncology and Haematology">
    <link uri="https://atlasgeneticsoncology.org/gene/44067/NRIP1"/>
</comment>
<organism>
    <name type="scientific">Homo sapiens</name>
    <name type="common">Human</name>
    <dbReference type="NCBI Taxonomy" id="9606"/>
    <lineage>
        <taxon>Eukaryota</taxon>
        <taxon>Metazoa</taxon>
        <taxon>Chordata</taxon>
        <taxon>Craniata</taxon>
        <taxon>Vertebrata</taxon>
        <taxon>Euteleostomi</taxon>
        <taxon>Mammalia</taxon>
        <taxon>Eutheria</taxon>
        <taxon>Euarchontoglires</taxon>
        <taxon>Primates</taxon>
        <taxon>Haplorrhini</taxon>
        <taxon>Catarrhini</taxon>
        <taxon>Hominidae</taxon>
        <taxon>Homo</taxon>
    </lineage>
</organism>
<sequence length="1158" mass="126942">MTHGEELGSDVHQDSIVLTYLEGLLMHQAAGGSGTAVDKKSAGHNEEDQNFNISGSAFPTCQSNGPVLNTHTYQGSGMLHLKKARLLQSSEDWNAAKRKRLSDSIMNLNVKKEALLAGMVDSVPKGKQDSTLLASLLQSFSSRLQTVALSQQIRQSLKEQGYALSHDSLKVEKDLRCYGVASSHLKTLLKKSKVKDQKPDTNLPDVTKNLIRDRFAESPHHVGQSGTKVMSEPLSCAARLQAVASMVEKRASPATSPKPSVACSQLALLLSSEAHLQQYSREHALKTQNANQAASERLAAMARLQENGQKDVGSYQLPKGMSSHLNGQARTSSSKLMASKSSATVFQNPMGIIPSSPKNAGYKNSLERNNIKQAANNSLLLHLLKSQTIPKPMNGHSHSERGSIFEESSTPTTIDEYSDNNPSFTDDSSGDESSYSNCVPIDLSCKHRTEKSESDQPVSLDNFTQSLLNTWDPKVPDVDIKEDQDTSKNSKLNSHQKVTLLQLLLGHKNEENVEKNTSPQGVHNDVSKFNTQNYARTSVIESPSTNRTTPVSTPPLLTSSKAGSPINLSQHSLVIKWNSPPYVCSTQSEKLTNTASNHSMDLTKSKDPPGEKPAQNEGAQNSATFSASKLLQNLAQCGMQSSMSVEEQRPSKQLLTGNTDKPIGMIDRLNSPLLSNKTNAVEENKAFSSQPTGPEPGLSGSEIENLLERRTVLQLLLGNPNKGKSEKKEKTPLRDESTQEHSERALSEQILMVKIKSEPCDDLQIPNTNVHLSHDAKSAPFLGMAPAVQRSAPALPVSEDFKSEPVSPQDFSFSKNGLLSRLLRQNQDSYLADDSDRSHRNNEMALLESKNLCMVPKKRKLYTEPLENPFKKMKNNIVDAANNHSAPEVLYGSLLNQEELKFSRNDLEFKYPAGHGSASESEHRSWARESKSFNVLKQLLLSENCVRDLSPHRSNSVADSKKKGHKNNVTNSKPEFSISSLNGLMYSSTQPSSCMDNRTFSYPGVVKTPVSPTFPEHLGCAGSRPESGLLNGCSMPSEKGPIKWVITDAEKNEYEKDSPRLTKTNPILYYMLQKGGNSVTSRETQDKDIWREASSAESVSQVTAKEELLPTAETKASFFNLRSPYNSHMGNNASRPHSANGEVYGLLGSVLTIKKESE</sequence>
<feature type="chain" id="PRO_0000057951" description="Nuclear receptor-interacting protein 1">
    <location>
        <begin position="1"/>
        <end position="1158"/>
    </location>
</feature>
<feature type="region of interest" description="Interaction with ZNF366" evidence="16">
    <location>
        <begin position="1"/>
        <end position="415"/>
    </location>
</feature>
<feature type="region of interest" description="Disordered" evidence="4">
    <location>
        <begin position="33"/>
        <end position="56"/>
    </location>
</feature>
<feature type="region of interest" description="Repression domain 1">
    <location>
        <begin position="78"/>
        <end position="333"/>
    </location>
</feature>
<feature type="region of interest" description="Disordered" evidence="4">
    <location>
        <begin position="393"/>
        <end position="435"/>
    </location>
</feature>
<feature type="region of interest" description="Repression domain 2">
    <location>
        <begin position="410"/>
        <end position="700"/>
    </location>
</feature>
<feature type="region of interest" description="Required for targeting to small nuclear foci">
    <location>
        <begin position="431"/>
        <end position="472"/>
    </location>
</feature>
<feature type="region of interest" description="Disordered" evidence="4">
    <location>
        <begin position="540"/>
        <end position="563"/>
    </location>
</feature>
<feature type="region of interest" description="Disordered" evidence="4">
    <location>
        <begin position="592"/>
        <end position="622"/>
    </location>
</feature>
<feature type="region of interest" description="Disordered" evidence="4">
    <location>
        <begin position="641"/>
        <end position="663"/>
    </location>
</feature>
<feature type="region of interest" description="Disordered" evidence="4">
    <location>
        <begin position="716"/>
        <end position="745"/>
    </location>
</feature>
<feature type="region of interest" description="Repression domain 3">
    <location>
        <begin position="735"/>
        <end position="885"/>
    </location>
</feature>
<feature type="region of interest" description="Interaction with ZNF366" evidence="16">
    <location>
        <begin position="753"/>
        <end position="1158"/>
    </location>
</feature>
<feature type="region of interest" description="Disordered" evidence="4">
    <location>
        <begin position="950"/>
        <end position="974"/>
    </location>
</feature>
<feature type="region of interest" description="Repression domain 4">
    <location>
        <begin position="1118"/>
        <end position="1158"/>
    </location>
</feature>
<feature type="short sequence motif" description="LXXLL motif 1">
    <location>
        <begin position="21"/>
        <end position="25"/>
    </location>
</feature>
<feature type="short sequence motif" description="LXXLL motif 2">
    <location>
        <begin position="133"/>
        <end position="137"/>
    </location>
</feature>
<feature type="short sequence motif" description="LXXLL motif 3">
    <location>
        <begin position="185"/>
        <end position="189"/>
    </location>
</feature>
<feature type="short sequence motif" description="LXXLL motif 4">
    <location>
        <begin position="266"/>
        <end position="270"/>
    </location>
</feature>
<feature type="short sequence motif" description="LXXLL motif 5">
    <location>
        <begin position="380"/>
        <end position="384"/>
    </location>
</feature>
<feature type="short sequence motif" description="CTBP-binding; principal site">
    <location>
        <begin position="440"/>
        <end position="446"/>
    </location>
</feature>
<feature type="short sequence motif" description="LXXLL motif 6">
    <location>
        <begin position="500"/>
        <end position="504"/>
    </location>
</feature>
<feature type="short sequence motif" description="CTBP-binding">
    <location>
        <begin position="565"/>
        <end position="569"/>
    </location>
</feature>
<feature type="short sequence motif" description="CTBP-binding" evidence="3">
    <location>
        <begin position="599"/>
        <end position="603"/>
    </location>
</feature>
<feature type="short sequence motif" description="LXXLL motif 7">
    <location>
        <begin position="713"/>
        <end position="717"/>
    </location>
</feature>
<feature type="short sequence motif" description="LXXLL motif 8">
    <location>
        <begin position="819"/>
        <end position="823"/>
    </location>
</feature>
<feature type="short sequence motif" description="LXXLL motif 9">
    <location>
        <begin position="936"/>
        <end position="940"/>
    </location>
</feature>
<feature type="short sequence motif" description="CTBP-binding">
    <location>
        <begin position="946"/>
        <end position="950"/>
    </location>
</feature>
<feature type="short sequence motif" description="Ligand-dependent nuclear receptor binding" evidence="1">
    <location>
        <begin position="1061"/>
        <end position="1074"/>
    </location>
</feature>
<feature type="compositionally biased region" description="Basic and acidic residues" evidence="4">
    <location>
        <begin position="37"/>
        <end position="47"/>
    </location>
</feature>
<feature type="compositionally biased region" description="Polar residues" evidence="4">
    <location>
        <begin position="406"/>
        <end position="435"/>
    </location>
</feature>
<feature type="compositionally biased region" description="Low complexity" evidence="4">
    <location>
        <begin position="548"/>
        <end position="560"/>
    </location>
</feature>
<feature type="compositionally biased region" description="Basic and acidic residues" evidence="4">
    <location>
        <begin position="601"/>
        <end position="610"/>
    </location>
</feature>
<feature type="compositionally biased region" description="Polar residues" evidence="4">
    <location>
        <begin position="641"/>
        <end position="659"/>
    </location>
</feature>
<feature type="compositionally biased region" description="Basic and acidic residues" evidence="4">
    <location>
        <begin position="723"/>
        <end position="745"/>
    </location>
</feature>
<feature type="modified residue" description="Phosphoserine" evidence="2">
    <location>
        <position position="104"/>
    </location>
</feature>
<feature type="modified residue" description="N6-acetyllysine; alternate" evidence="2">
    <location>
        <position position="111"/>
    </location>
</feature>
<feature type="modified residue" description="N6-acetyllysine" evidence="2">
    <location>
        <position position="158"/>
    </location>
</feature>
<feature type="modified residue" description="Phosphothreonine" evidence="2">
    <location>
        <position position="207"/>
    </location>
</feature>
<feature type="modified residue" description="Phosphoserine" evidence="24">
    <location>
        <position position="218"/>
    </location>
</feature>
<feature type="modified residue" description="N6-acetyllysine" evidence="2">
    <location>
        <position position="286"/>
    </location>
</feature>
<feature type="modified residue" description="N6-acetyllysine" evidence="2">
    <location>
        <position position="310"/>
    </location>
</feature>
<feature type="modified residue" description="Phosphoserine" evidence="2">
    <location>
        <position position="356"/>
    </location>
</feature>
<feature type="modified residue" description="Phosphoserine" evidence="2">
    <location>
        <position position="378"/>
    </location>
</feature>
<feature type="modified residue" description="N6-acetyllysine" evidence="7">
    <location>
        <position position="446"/>
    </location>
</feature>
<feature type="modified residue" description="N6-acetyllysine" evidence="2">
    <location>
        <position position="481"/>
    </location>
</feature>
<feature type="modified residue" description="Phosphoserine" evidence="2">
    <location>
        <position position="487"/>
    </location>
</feature>
<feature type="modified residue" description="Phosphoserine" evidence="2">
    <location>
        <position position="518"/>
    </location>
</feature>
<feature type="modified residue" description="N6-acetyllysine" evidence="2">
    <location>
        <position position="528"/>
    </location>
</feature>
<feature type="modified residue" description="Phosphoserine" evidence="2">
    <location>
        <position position="542"/>
    </location>
</feature>
<feature type="modified residue" description="Phosphoserine" evidence="23">
    <location>
        <position position="564"/>
    </location>
</feature>
<feature type="modified residue" description="N6-acetyllysine" evidence="2">
    <location>
        <position position="606"/>
    </location>
</feature>
<feature type="modified residue" description="Phosphoserine" evidence="24">
    <location>
        <position position="671"/>
    </location>
</feature>
<feature type="modified residue" description="Phosphoserine" evidence="23 24">
    <location>
        <position position="807"/>
    </location>
</feature>
<feature type="modified residue" description="N6-acetyllysine; alternate" evidence="2">
    <location>
        <position position="931"/>
    </location>
</feature>
<feature type="modified residue" description="Phosphoserine" evidence="2">
    <location>
        <position position="1001"/>
    </location>
</feature>
<feature type="cross-link" description="Glycyl lysine isopeptide (Lys-Gly) (interchain with G-Cter in SUMO2); alternate" evidence="26">
    <location>
        <position position="111"/>
    </location>
</feature>
<feature type="cross-link" description="Glycyl lysine isopeptide (Lys-Gly) (interchain with G-Cter in SUMO2)" evidence="26">
    <location>
        <position position="170"/>
    </location>
</feature>
<feature type="cross-link" description="Glycyl lysine isopeptide (Lys-Gly) (interchain with G-Cter in SUMO2)" evidence="26">
    <location>
        <position position="195"/>
    </location>
</feature>
<feature type="cross-link" description="Glycyl lysine isopeptide (Lys-Gly) (interchain with G-Cter in SUMO2)" evidence="26">
    <location>
        <position position="198"/>
    </location>
</feature>
<feature type="cross-link" description="Glycyl lysine isopeptide (Lys-Gly) (interchain with G-Cter in SUMO2)" evidence="26">
    <location>
        <position position="372"/>
    </location>
</feature>
<feature type="cross-link" description="Glycyl lysine isopeptide (Lys-Gly) (interchain with G-Cter in SUMO2)" evidence="26">
    <location>
        <position position="508"/>
    </location>
</feature>
<feature type="cross-link" description="Glycyl lysine isopeptide (Lys-Gly) (interchain with G-Cter in SUMO2)" evidence="25 26">
    <location>
        <position position="756"/>
    </location>
</feature>
<feature type="cross-link" description="Glycyl lysine isopeptide (Lys-Gly) (interchain with G-Cter in SUMO2)" evidence="26">
    <location>
        <position position="802"/>
    </location>
</feature>
<feature type="cross-link" description="Glycyl lysine isopeptide (Lys-Gly) (interchain with G-Cter in SUMO2)" evidence="26">
    <location>
        <position position="850"/>
    </location>
</feature>
<feature type="cross-link" description="Glycyl lysine isopeptide (Lys-Gly) (interchain with G-Cter in SUMO2)" evidence="26">
    <location>
        <position position="901"/>
    </location>
</feature>
<feature type="cross-link" description="Glycyl lysine isopeptide (Lys-Gly) (interchain with G-Cter in SUMO2); alternate" evidence="26">
    <location>
        <position position="931"/>
    </location>
</feature>
<feature type="cross-link" description="Glycyl lysine isopeptide (Lys-Gly) (interchain with G-Cter in SUMO2)" evidence="25 26">
    <location>
        <position position="1105"/>
    </location>
</feature>
<feature type="cross-link" description="Glycyl lysine isopeptide (Lys-Gly) (interchain with G-Cter in SUMO2)" evidence="26">
    <location>
        <position position="1115"/>
    </location>
</feature>
<feature type="cross-link" description="Glycyl lysine isopeptide (Lys-Gly) (interchain with G-Cter in SUMO2)" evidence="26">
    <location>
        <position position="1154"/>
    </location>
</feature>
<feature type="sequence variant" id="VAR_051241" description="In dbSNP:rs9941840.">
    <original>V</original>
    <variation>I</variation>
    <location>
        <position position="37"/>
    </location>
</feature>
<feature type="sequence variant" id="VAR_023706" description="In dbSNP:rs139263261." evidence="13">
    <original>H</original>
    <variation>R</variation>
    <location>
        <position position="221"/>
    </location>
</feature>
<feature type="sequence variant" id="VAR_034142" description="In dbSNP:rs2228507.">
    <original>Y</original>
    <variation>F</variation>
    <location>
        <position position="315"/>
    </location>
</feature>
<feature type="sequence variant" id="VAR_023707" description="In dbSNP:rs150468995." evidence="13">
    <original>I</original>
    <variation>V</variation>
    <location>
        <position position="441"/>
    </location>
</feature>
<feature type="sequence variant" id="VAR_023708" description="In dbSNP:rs2229742." evidence="13 20">
    <original>R</original>
    <variation>G</variation>
    <location>
        <position position="448"/>
    </location>
</feature>
<feature type="sequence variant" id="VAR_051242" description="In dbSNP:rs9975169.">
    <original>N</original>
    <variation>S</variation>
    <location>
        <position position="567"/>
    </location>
</feature>
<feature type="sequence variant" id="VAR_023709" description="In dbSNP:rs61750208." evidence="13">
    <original>S</original>
    <variation>L</variation>
    <location>
        <position position="803"/>
    </location>
</feature>
<feature type="sequence variant" id="VAR_023710" description="In dbSNP:rs140803495." evidence="13">
    <original>V</original>
    <variation>F</variation>
    <location>
        <position position="1079"/>
    </location>
</feature>
<feature type="mutagenesis site" description="Abolishes interaction with CTBP1." evidence="7">
    <original>PIDL</original>
    <variation>AAAA</variation>
    <location>
        <begin position="440"/>
        <end position="443"/>
    </location>
</feature>
<feature type="mutagenesis site" description="Abolishes interaction with CTBP1 and attenuates nuclear hormone receptor-dependent transcription repression.">
    <original>PID</original>
    <variation>AIA</variation>
    <location>
        <begin position="440"/>
        <end position="442"/>
    </location>
</feature>
<feature type="mutagenesis site" description="Reduces, but does not completely abolish, interaction with CTBP. Reduces transcriptional repression." evidence="11 12">
    <original>DL</original>
    <variation>AA</variation>
    <location>
        <begin position="442"/>
        <end position="443"/>
    </location>
</feature>
<feature type="mutagenesis site" description="Disrupts interaction with CTBP1, and CTBP2 to a lesser extent. Disrupts transcriptional repression; when associated with 567-AS-568." evidence="11 12">
    <original>DL</original>
    <variation>AS</variation>
    <location>
        <begin position="442"/>
        <end position="443"/>
    </location>
</feature>
<feature type="mutagenesis site" description="Disrupts interaction with CTBP1. Decreases lysine acetylation. Disrupts nuclear hormone receptor-dependent transcription repression." evidence="7">
    <original>K</original>
    <variation>Q</variation>
    <location>
        <position position="446"/>
    </location>
</feature>
<feature type="mutagenesis site" description="Does not disrupt nuclear hormone receptor-dependent transcription repression." evidence="7">
    <original>K</original>
    <variation>R</variation>
    <location>
        <position position="446"/>
    </location>
</feature>
<feature type="mutagenesis site" description="Disrupts transcriptional repression." evidence="11 12">
    <original>NL</original>
    <variation>AA</variation>
    <location>
        <begin position="567"/>
        <end position="568"/>
    </location>
</feature>
<feature type="mutagenesis site" description="Disrupts interaction with CTBP1 and CTBP2. Disrupts transcriptional repression; when associated with 442-AS-443." evidence="11 12">
    <original>NL</original>
    <variation>AS</variation>
    <location>
        <begin position="567"/>
        <end position="568"/>
    </location>
</feature>
<feature type="mutagenesis site" description="Does not further disrupt transcriptional repression; when associated with 442-AA-443 and 567-AA-568.">
    <original>SMDLT</original>
    <variation>PIAAS</variation>
    <location>
        <begin position="599"/>
        <end position="603"/>
    </location>
</feature>
<feature type="mutagenesis site" description="Abolishes CTBP binding but retains transcriptional repressor activity." evidence="11">
    <original>DL</original>
    <variation>AA</variation>
    <location>
        <begin position="948"/>
        <end position="949"/>
    </location>
</feature>
<feature type="sequence conflict" description="In Ref. 1; CAA59108." evidence="22" ref="1">
    <original>P</original>
    <variation>R</variation>
    <location>
        <position position="124"/>
    </location>
</feature>
<feature type="sequence conflict" description="In Ref. 1; CAA59108." evidence="22" ref="1">
    <original>NKGKSE</original>
    <variation>TKGRVK</variation>
    <location>
        <begin position="721"/>
        <end position="726"/>
    </location>
</feature>
<feature type="sequence conflict" description="In Ref. 3; AAH40361." evidence="22" ref="3">
    <original>S</original>
    <variation>I</variation>
    <location>
        <position position="954"/>
    </location>
</feature>
<feature type="sequence conflict" description="In Ref. 1; CAA59108." evidence="22" ref="1">
    <original>T</original>
    <variation>A</variation>
    <location>
        <position position="1080"/>
    </location>
</feature>
<feature type="helix" evidence="27">
    <location>
        <begin position="379"/>
        <end position="385"/>
    </location>
</feature>
<feature type="helix" evidence="28">
    <location>
        <begin position="500"/>
        <end position="505"/>
    </location>
</feature>
<accession>P48552</accession>
<accession>Q8IWE8</accession>
<evidence type="ECO:0000250" key="1"/>
<evidence type="ECO:0000250" key="2">
    <source>
        <dbReference type="UniProtKB" id="Q8CBD1"/>
    </source>
</evidence>
<evidence type="ECO:0000255" key="3"/>
<evidence type="ECO:0000256" key="4">
    <source>
        <dbReference type="SAM" id="MobiDB-lite"/>
    </source>
</evidence>
<evidence type="ECO:0000269" key="5">
    <source>
    </source>
</evidence>
<evidence type="ECO:0000269" key="6">
    <source>
    </source>
</evidence>
<evidence type="ECO:0000269" key="7">
    <source>
    </source>
</evidence>
<evidence type="ECO:0000269" key="8">
    <source>
    </source>
</evidence>
<evidence type="ECO:0000269" key="9">
    <source>
    </source>
</evidence>
<evidence type="ECO:0000269" key="10">
    <source>
    </source>
</evidence>
<evidence type="ECO:0000269" key="11">
    <source>
    </source>
</evidence>
<evidence type="ECO:0000269" key="12">
    <source>
    </source>
</evidence>
<evidence type="ECO:0000269" key="13">
    <source>
    </source>
</evidence>
<evidence type="ECO:0000269" key="14">
    <source>
    </source>
</evidence>
<evidence type="ECO:0000269" key="15">
    <source>
    </source>
</evidence>
<evidence type="ECO:0000269" key="16">
    <source>
    </source>
</evidence>
<evidence type="ECO:0000269" key="17">
    <source>
    </source>
</evidence>
<evidence type="ECO:0000269" key="18">
    <source>
    </source>
</evidence>
<evidence type="ECO:0000269" key="19">
    <source>
    </source>
</evidence>
<evidence type="ECO:0000269" key="20">
    <source>
    </source>
</evidence>
<evidence type="ECO:0000269" key="21">
    <source>
    </source>
</evidence>
<evidence type="ECO:0000305" key="22"/>
<evidence type="ECO:0007744" key="23">
    <source>
    </source>
</evidence>
<evidence type="ECO:0007744" key="24">
    <source>
    </source>
</evidence>
<evidence type="ECO:0007744" key="25">
    <source>
    </source>
</evidence>
<evidence type="ECO:0007744" key="26">
    <source>
    </source>
</evidence>
<evidence type="ECO:0007829" key="27">
    <source>
        <dbReference type="PDB" id="2GPO"/>
    </source>
</evidence>
<evidence type="ECO:0007829" key="28">
    <source>
        <dbReference type="PDB" id="5NTW"/>
    </source>
</evidence>
<name>NRIP1_HUMAN</name>